<reference key="1">
    <citation type="journal article" date="2000" name="Nature">
        <title>Complete genome sequence of Pseudomonas aeruginosa PAO1, an opportunistic pathogen.</title>
        <authorList>
            <person name="Stover C.K."/>
            <person name="Pham X.-Q.T."/>
            <person name="Erwin A.L."/>
            <person name="Mizoguchi S.D."/>
            <person name="Warrener P."/>
            <person name="Hickey M.J."/>
            <person name="Brinkman F.S.L."/>
            <person name="Hufnagle W.O."/>
            <person name="Kowalik D.J."/>
            <person name="Lagrou M."/>
            <person name="Garber R.L."/>
            <person name="Goltry L."/>
            <person name="Tolentino E."/>
            <person name="Westbrock-Wadman S."/>
            <person name="Yuan Y."/>
            <person name="Brody L.L."/>
            <person name="Coulter S.N."/>
            <person name="Folger K.R."/>
            <person name="Kas A."/>
            <person name="Larbig K."/>
            <person name="Lim R.M."/>
            <person name="Smith K.A."/>
            <person name="Spencer D.H."/>
            <person name="Wong G.K.-S."/>
            <person name="Wu Z."/>
            <person name="Paulsen I.T."/>
            <person name="Reizer J."/>
            <person name="Saier M.H. Jr."/>
            <person name="Hancock R.E.W."/>
            <person name="Lory S."/>
            <person name="Olson M.V."/>
        </authorList>
    </citation>
    <scope>NUCLEOTIDE SEQUENCE [LARGE SCALE GENOMIC DNA]</scope>
    <source>
        <strain>ATCC 15692 / DSM 22644 / CIP 104116 / JCM 14847 / LMG 12228 / 1C / PRS 101 / PAO1</strain>
    </source>
</reference>
<sequence length="587" mass="65199">MKDTIRQLIQQALDQLTADGTLPAGLTPDIQVENTKDRSHGDFASNIAMMLAKPAGMKPRDLAARLVEAIPAHEQLAKVEIAGPGFLNFFQDHVWLAASLDRALADERLGVRKAGPAQRVVIDLSSPNLAKEMHVGHLRSTIIGDAVARVLEFLGDTVIRQNHVGDWGTQFGMLLAYLEEQPVDAEAELHDLEVFYRAAKKRFDESPEFADRARELVVKLQAGDPDCLRLWTRFNEISLSHCQKVYDRLGVKLSMADVMGESAYNDDLAQVVADLTAKGLLTEDNGALCVFLEEFKNAEGNPLPVIVQKAGGGYLYATTDLAAMRYRHNVLHADRVLYFVDQRQALHFQQVFEVARRAGFVPAGMELEHMGFGTMNGADGRPFKTRDGGTVKLIDLLEEAESRAYALVKERNEQRAERGEEPFDEVQLREIGRVVGIDSVKYADLSKHRTSDYSFNFELMLSFEGNTAPYLLYACTRVASVFRKLGQGREQLGGKIVLEQPQELALAAQLAQFGDLINNVALKGVPHLLCAYLYELAGLFSSFYEHCPILTAEDPAQKDSRLRLAALTGRTLEQGLELLGLKTLERM</sequence>
<organism>
    <name type="scientific">Pseudomonas aeruginosa (strain ATCC 15692 / DSM 22644 / CIP 104116 / JCM 14847 / LMG 12228 / 1C / PRS 101 / PAO1)</name>
    <dbReference type="NCBI Taxonomy" id="208964"/>
    <lineage>
        <taxon>Bacteria</taxon>
        <taxon>Pseudomonadati</taxon>
        <taxon>Pseudomonadota</taxon>
        <taxon>Gammaproteobacteria</taxon>
        <taxon>Pseudomonadales</taxon>
        <taxon>Pseudomonadaceae</taxon>
        <taxon>Pseudomonas</taxon>
    </lineage>
</organism>
<protein>
    <recommendedName>
        <fullName evidence="1">Arginine--tRNA ligase</fullName>
        <ecNumber evidence="1">6.1.1.19</ecNumber>
    </recommendedName>
    <alternativeName>
        <fullName evidence="1">Arginyl-tRNA synthetase</fullName>
        <shortName evidence="1">ArgRS</shortName>
    </alternativeName>
</protein>
<evidence type="ECO:0000255" key="1">
    <source>
        <dbReference type="HAMAP-Rule" id="MF_00123"/>
    </source>
</evidence>
<keyword id="KW-0030">Aminoacyl-tRNA synthetase</keyword>
<keyword id="KW-0067">ATP-binding</keyword>
<keyword id="KW-0963">Cytoplasm</keyword>
<keyword id="KW-0436">Ligase</keyword>
<keyword id="KW-0547">Nucleotide-binding</keyword>
<keyword id="KW-0648">Protein biosynthesis</keyword>
<keyword id="KW-1185">Reference proteome</keyword>
<gene>
    <name evidence="1" type="primary">argS</name>
    <name type="ordered locus">PA5051</name>
</gene>
<comment type="catalytic activity">
    <reaction evidence="1">
        <text>tRNA(Arg) + L-arginine + ATP = L-arginyl-tRNA(Arg) + AMP + diphosphate</text>
        <dbReference type="Rhea" id="RHEA:20301"/>
        <dbReference type="Rhea" id="RHEA-COMP:9658"/>
        <dbReference type="Rhea" id="RHEA-COMP:9673"/>
        <dbReference type="ChEBI" id="CHEBI:30616"/>
        <dbReference type="ChEBI" id="CHEBI:32682"/>
        <dbReference type="ChEBI" id="CHEBI:33019"/>
        <dbReference type="ChEBI" id="CHEBI:78442"/>
        <dbReference type="ChEBI" id="CHEBI:78513"/>
        <dbReference type="ChEBI" id="CHEBI:456215"/>
        <dbReference type="EC" id="6.1.1.19"/>
    </reaction>
</comment>
<comment type="subunit">
    <text evidence="1">Monomer.</text>
</comment>
<comment type="subcellular location">
    <subcellularLocation>
        <location evidence="1">Cytoplasm</location>
    </subcellularLocation>
</comment>
<comment type="similarity">
    <text evidence="1">Belongs to the class-I aminoacyl-tRNA synthetase family.</text>
</comment>
<dbReference type="EC" id="6.1.1.19" evidence="1"/>
<dbReference type="EMBL" id="AE004091">
    <property type="protein sequence ID" value="AAG08436.1"/>
    <property type="molecule type" value="Genomic_DNA"/>
</dbReference>
<dbReference type="PIR" id="B83015">
    <property type="entry name" value="B83015"/>
</dbReference>
<dbReference type="RefSeq" id="NP_253738.1">
    <property type="nucleotide sequence ID" value="NC_002516.2"/>
</dbReference>
<dbReference type="RefSeq" id="WP_003110892.1">
    <property type="nucleotide sequence ID" value="NZ_QZGE01000002.1"/>
</dbReference>
<dbReference type="SMR" id="Q9HUC8"/>
<dbReference type="FunCoup" id="Q9HUC8">
    <property type="interactions" value="656"/>
</dbReference>
<dbReference type="STRING" id="208964.PA5051"/>
<dbReference type="PaxDb" id="208964-PA5051"/>
<dbReference type="GeneID" id="881194"/>
<dbReference type="KEGG" id="pae:PA5051"/>
<dbReference type="PATRIC" id="fig|208964.12.peg.5295"/>
<dbReference type="PseudoCAP" id="PA5051"/>
<dbReference type="HOGENOM" id="CLU_006406_5_1_6"/>
<dbReference type="InParanoid" id="Q9HUC8"/>
<dbReference type="OrthoDB" id="9803211at2"/>
<dbReference type="PhylomeDB" id="Q9HUC8"/>
<dbReference type="BioCyc" id="PAER208964:G1FZ6-5167-MONOMER"/>
<dbReference type="Proteomes" id="UP000002438">
    <property type="component" value="Chromosome"/>
</dbReference>
<dbReference type="GO" id="GO:0005737">
    <property type="term" value="C:cytoplasm"/>
    <property type="evidence" value="ECO:0007669"/>
    <property type="project" value="UniProtKB-SubCell"/>
</dbReference>
<dbReference type="GO" id="GO:0004814">
    <property type="term" value="F:arginine-tRNA ligase activity"/>
    <property type="evidence" value="ECO:0000318"/>
    <property type="project" value="GO_Central"/>
</dbReference>
<dbReference type="GO" id="GO:0005524">
    <property type="term" value="F:ATP binding"/>
    <property type="evidence" value="ECO:0007669"/>
    <property type="project" value="UniProtKB-UniRule"/>
</dbReference>
<dbReference type="GO" id="GO:0006420">
    <property type="term" value="P:arginyl-tRNA aminoacylation"/>
    <property type="evidence" value="ECO:0000318"/>
    <property type="project" value="GO_Central"/>
</dbReference>
<dbReference type="CDD" id="cd00671">
    <property type="entry name" value="ArgRS_core"/>
    <property type="match status" value="1"/>
</dbReference>
<dbReference type="FunFam" id="1.10.730.10:FF:000001">
    <property type="entry name" value="Arginine--tRNA ligase"/>
    <property type="match status" value="1"/>
</dbReference>
<dbReference type="FunFam" id="3.30.1360.70:FF:000003">
    <property type="entry name" value="Arginine--tRNA ligase"/>
    <property type="match status" value="1"/>
</dbReference>
<dbReference type="FunFam" id="3.40.50.620:FF:000030">
    <property type="entry name" value="Arginine--tRNA ligase"/>
    <property type="match status" value="1"/>
</dbReference>
<dbReference type="Gene3D" id="3.30.1360.70">
    <property type="entry name" value="Arginyl tRNA synthetase N-terminal domain"/>
    <property type="match status" value="1"/>
</dbReference>
<dbReference type="Gene3D" id="3.40.50.620">
    <property type="entry name" value="HUPs"/>
    <property type="match status" value="1"/>
</dbReference>
<dbReference type="Gene3D" id="1.10.730.10">
    <property type="entry name" value="Isoleucyl-tRNA Synthetase, Domain 1"/>
    <property type="match status" value="1"/>
</dbReference>
<dbReference type="HAMAP" id="MF_00123">
    <property type="entry name" value="Arg_tRNA_synth"/>
    <property type="match status" value="1"/>
</dbReference>
<dbReference type="InterPro" id="IPR001412">
    <property type="entry name" value="aa-tRNA-synth_I_CS"/>
</dbReference>
<dbReference type="InterPro" id="IPR001278">
    <property type="entry name" value="Arg-tRNA-ligase"/>
</dbReference>
<dbReference type="InterPro" id="IPR005148">
    <property type="entry name" value="Arg-tRNA-synth_N"/>
</dbReference>
<dbReference type="InterPro" id="IPR036695">
    <property type="entry name" value="Arg-tRNA-synth_N_sf"/>
</dbReference>
<dbReference type="InterPro" id="IPR035684">
    <property type="entry name" value="ArgRS_core"/>
</dbReference>
<dbReference type="InterPro" id="IPR008909">
    <property type="entry name" value="DALR_anticod-bd"/>
</dbReference>
<dbReference type="InterPro" id="IPR014729">
    <property type="entry name" value="Rossmann-like_a/b/a_fold"/>
</dbReference>
<dbReference type="InterPro" id="IPR009080">
    <property type="entry name" value="tRNAsynth_Ia_anticodon-bd"/>
</dbReference>
<dbReference type="NCBIfam" id="TIGR00456">
    <property type="entry name" value="argS"/>
    <property type="match status" value="1"/>
</dbReference>
<dbReference type="PANTHER" id="PTHR11956:SF5">
    <property type="entry name" value="ARGININE--TRNA LIGASE, CYTOPLASMIC"/>
    <property type="match status" value="1"/>
</dbReference>
<dbReference type="PANTHER" id="PTHR11956">
    <property type="entry name" value="ARGINYL-TRNA SYNTHETASE"/>
    <property type="match status" value="1"/>
</dbReference>
<dbReference type="Pfam" id="PF03485">
    <property type="entry name" value="Arg_tRNA_synt_N"/>
    <property type="match status" value="1"/>
</dbReference>
<dbReference type="Pfam" id="PF05746">
    <property type="entry name" value="DALR_1"/>
    <property type="match status" value="1"/>
</dbReference>
<dbReference type="Pfam" id="PF00750">
    <property type="entry name" value="tRNA-synt_1d"/>
    <property type="match status" value="1"/>
</dbReference>
<dbReference type="PRINTS" id="PR01038">
    <property type="entry name" value="TRNASYNTHARG"/>
</dbReference>
<dbReference type="SMART" id="SM01016">
    <property type="entry name" value="Arg_tRNA_synt_N"/>
    <property type="match status" value="1"/>
</dbReference>
<dbReference type="SMART" id="SM00836">
    <property type="entry name" value="DALR_1"/>
    <property type="match status" value="1"/>
</dbReference>
<dbReference type="SUPFAM" id="SSF47323">
    <property type="entry name" value="Anticodon-binding domain of a subclass of class I aminoacyl-tRNA synthetases"/>
    <property type="match status" value="1"/>
</dbReference>
<dbReference type="SUPFAM" id="SSF55190">
    <property type="entry name" value="Arginyl-tRNA synthetase (ArgRS), N-terminal 'additional' domain"/>
    <property type="match status" value="1"/>
</dbReference>
<dbReference type="SUPFAM" id="SSF52374">
    <property type="entry name" value="Nucleotidylyl transferase"/>
    <property type="match status" value="1"/>
</dbReference>
<dbReference type="PROSITE" id="PS00178">
    <property type="entry name" value="AA_TRNA_LIGASE_I"/>
    <property type="match status" value="1"/>
</dbReference>
<accession>Q9HUC8</accession>
<feature type="chain" id="PRO_0000151592" description="Arginine--tRNA ligase">
    <location>
        <begin position="1"/>
        <end position="587"/>
    </location>
</feature>
<feature type="short sequence motif" description="'HIGH' region">
    <location>
        <begin position="127"/>
        <end position="137"/>
    </location>
</feature>
<name>SYR_PSEAE</name>
<proteinExistence type="inferred from homology"/>